<reference key="1">
    <citation type="journal article" date="2008" name="PLoS ONE">
        <title>Genome sequence of the saprophyte Leptospira biflexa provides insights into the evolution of Leptospira and the pathogenesis of leptospirosis.</title>
        <authorList>
            <person name="Picardeau M."/>
            <person name="Bulach D.M."/>
            <person name="Bouchier C."/>
            <person name="Zuerner R.L."/>
            <person name="Zidane N."/>
            <person name="Wilson P.J."/>
            <person name="Creno S."/>
            <person name="Kuczek E.S."/>
            <person name="Bommezzadri S."/>
            <person name="Davis J.C."/>
            <person name="McGrath A."/>
            <person name="Johnson M.J."/>
            <person name="Boursaux-Eude C."/>
            <person name="Seemann T."/>
            <person name="Rouy Z."/>
            <person name="Coppel R.L."/>
            <person name="Rood J.I."/>
            <person name="Lajus A."/>
            <person name="Davies J.K."/>
            <person name="Medigue C."/>
            <person name="Adler B."/>
        </authorList>
    </citation>
    <scope>NUCLEOTIDE SEQUENCE [LARGE SCALE GENOMIC DNA]</scope>
    <source>
        <strain>Patoc 1 / ATCC 23582 / Paris</strain>
    </source>
</reference>
<organism>
    <name type="scientific">Leptospira biflexa serovar Patoc (strain Patoc 1 / ATCC 23582 / Paris)</name>
    <dbReference type="NCBI Taxonomy" id="456481"/>
    <lineage>
        <taxon>Bacteria</taxon>
        <taxon>Pseudomonadati</taxon>
        <taxon>Spirochaetota</taxon>
        <taxon>Spirochaetia</taxon>
        <taxon>Leptospirales</taxon>
        <taxon>Leptospiraceae</taxon>
        <taxon>Leptospira</taxon>
    </lineage>
</organism>
<feature type="chain" id="PRO_1000193391" description="DNA repair protein RecO">
    <location>
        <begin position="1"/>
        <end position="249"/>
    </location>
</feature>
<name>RECO_LEPBP</name>
<evidence type="ECO:0000255" key="1">
    <source>
        <dbReference type="HAMAP-Rule" id="MF_00201"/>
    </source>
</evidence>
<keyword id="KW-0227">DNA damage</keyword>
<keyword id="KW-0233">DNA recombination</keyword>
<keyword id="KW-0234">DNA repair</keyword>
<keyword id="KW-1185">Reference proteome</keyword>
<proteinExistence type="inferred from homology"/>
<gene>
    <name evidence="1" type="primary">recO</name>
    <name type="ordered locus">LEPBI_I2091</name>
</gene>
<accession>B0SSV3</accession>
<protein>
    <recommendedName>
        <fullName evidence="1">DNA repair protein RecO</fullName>
    </recommendedName>
    <alternativeName>
        <fullName evidence="1">Recombination protein O</fullName>
    </alternativeName>
</protein>
<dbReference type="EMBL" id="CP000786">
    <property type="protein sequence ID" value="ABZ98193.1"/>
    <property type="molecule type" value="Genomic_DNA"/>
</dbReference>
<dbReference type="RefSeq" id="WP_012389063.1">
    <property type="nucleotide sequence ID" value="NC_010602.1"/>
</dbReference>
<dbReference type="SMR" id="B0SSV3"/>
<dbReference type="STRING" id="456481.LEPBI_I2091"/>
<dbReference type="KEGG" id="lbi:LEPBI_I2091"/>
<dbReference type="HOGENOM" id="CLU_1068729_0_0_12"/>
<dbReference type="OrthoDB" id="9812244at2"/>
<dbReference type="BioCyc" id="LBIF456481:LEPBI_RS10330-MONOMER"/>
<dbReference type="Proteomes" id="UP000001847">
    <property type="component" value="Chromosome I"/>
</dbReference>
<dbReference type="GO" id="GO:0043590">
    <property type="term" value="C:bacterial nucleoid"/>
    <property type="evidence" value="ECO:0007669"/>
    <property type="project" value="TreeGrafter"/>
</dbReference>
<dbReference type="GO" id="GO:0006310">
    <property type="term" value="P:DNA recombination"/>
    <property type="evidence" value="ECO:0007669"/>
    <property type="project" value="UniProtKB-UniRule"/>
</dbReference>
<dbReference type="GO" id="GO:0006302">
    <property type="term" value="P:double-strand break repair"/>
    <property type="evidence" value="ECO:0007669"/>
    <property type="project" value="TreeGrafter"/>
</dbReference>
<dbReference type="Gene3D" id="2.40.50.140">
    <property type="entry name" value="Nucleic acid-binding proteins"/>
    <property type="match status" value="1"/>
</dbReference>
<dbReference type="Gene3D" id="1.20.1440.120">
    <property type="entry name" value="Recombination protein O, C-terminal domain"/>
    <property type="match status" value="1"/>
</dbReference>
<dbReference type="HAMAP" id="MF_00201">
    <property type="entry name" value="RecO"/>
    <property type="match status" value="1"/>
</dbReference>
<dbReference type="InterPro" id="IPR037278">
    <property type="entry name" value="ARFGAP/RecO"/>
</dbReference>
<dbReference type="InterPro" id="IPR022572">
    <property type="entry name" value="DNA_rep/recomb_RecO_N"/>
</dbReference>
<dbReference type="InterPro" id="IPR012340">
    <property type="entry name" value="NA-bd_OB-fold"/>
</dbReference>
<dbReference type="InterPro" id="IPR003717">
    <property type="entry name" value="RecO"/>
</dbReference>
<dbReference type="InterPro" id="IPR042242">
    <property type="entry name" value="RecO_C"/>
</dbReference>
<dbReference type="NCBIfam" id="TIGR00613">
    <property type="entry name" value="reco"/>
    <property type="match status" value="1"/>
</dbReference>
<dbReference type="PANTHER" id="PTHR33991">
    <property type="entry name" value="DNA REPAIR PROTEIN RECO"/>
    <property type="match status" value="1"/>
</dbReference>
<dbReference type="PANTHER" id="PTHR33991:SF1">
    <property type="entry name" value="DNA REPAIR PROTEIN RECO"/>
    <property type="match status" value="1"/>
</dbReference>
<dbReference type="Pfam" id="PF02565">
    <property type="entry name" value="RecO_C"/>
    <property type="match status" value="1"/>
</dbReference>
<dbReference type="Pfam" id="PF11967">
    <property type="entry name" value="RecO_N"/>
    <property type="match status" value="1"/>
</dbReference>
<dbReference type="SUPFAM" id="SSF57863">
    <property type="entry name" value="ArfGap/RecO-like zinc finger"/>
    <property type="match status" value="1"/>
</dbReference>
<sequence length="249" mass="29019">MAIRKEIGIIIQSKDIGESDRLISLAGETQVRMNFISKGIRKSKRRAIISTELGCLVEVDYYDQVEKDWKSTKEIHLIKRYDELKKDYVGTLFVLYLTELTSQLYPDGENHPFLYQLLSGSLEVSNENGFRKEILPFFKLRALTHMGHFPTEFYCHTCGEEVLTKAKAYFSVDSREFLCSDCHPITKDHLPVLKLFHTMLSKKFSNVLVIFPKEAEYREGDMILNQFLRSLLGRELKSYFEFYKTIGDL</sequence>
<comment type="function">
    <text evidence="1">Involved in DNA repair and RecF pathway recombination.</text>
</comment>
<comment type="similarity">
    <text evidence="1">Belongs to the RecO family.</text>
</comment>